<keyword id="KW-0963">Cytoplasm</keyword>
<keyword id="KW-0489">Methyltransferase</keyword>
<keyword id="KW-0949">S-adenosyl-L-methionine</keyword>
<keyword id="KW-0808">Transferase</keyword>
<proteinExistence type="inferred from homology"/>
<organism>
    <name type="scientific">Shewanella baltica (strain OS195)</name>
    <dbReference type="NCBI Taxonomy" id="399599"/>
    <lineage>
        <taxon>Bacteria</taxon>
        <taxon>Pseudomonadati</taxon>
        <taxon>Pseudomonadota</taxon>
        <taxon>Gammaproteobacteria</taxon>
        <taxon>Alteromonadales</taxon>
        <taxon>Shewanellaceae</taxon>
        <taxon>Shewanella</taxon>
    </lineage>
</organism>
<feature type="chain" id="PRO_1000083762" description="Thiopurine S-methyltransferase">
    <location>
        <begin position="1"/>
        <end position="218"/>
    </location>
</feature>
<feature type="binding site" evidence="1">
    <location>
        <position position="10"/>
    </location>
    <ligand>
        <name>S-adenosyl-L-methionine</name>
        <dbReference type="ChEBI" id="CHEBI:59789"/>
    </ligand>
</feature>
<feature type="binding site" evidence="1">
    <location>
        <position position="45"/>
    </location>
    <ligand>
        <name>S-adenosyl-L-methionine</name>
        <dbReference type="ChEBI" id="CHEBI:59789"/>
    </ligand>
</feature>
<feature type="binding site" evidence="1">
    <location>
        <position position="66"/>
    </location>
    <ligand>
        <name>S-adenosyl-L-methionine</name>
        <dbReference type="ChEBI" id="CHEBI:59789"/>
    </ligand>
</feature>
<feature type="binding site" evidence="1">
    <location>
        <position position="123"/>
    </location>
    <ligand>
        <name>S-adenosyl-L-methionine</name>
        <dbReference type="ChEBI" id="CHEBI:59789"/>
    </ligand>
</feature>
<comment type="catalytic activity">
    <reaction evidence="1">
        <text>S-adenosyl-L-methionine + a thiopurine = S-adenosyl-L-homocysteine + a thiopurine S-methylether.</text>
        <dbReference type="EC" id="2.1.1.67"/>
    </reaction>
</comment>
<comment type="subcellular location">
    <subcellularLocation>
        <location evidence="1">Cytoplasm</location>
    </subcellularLocation>
</comment>
<comment type="similarity">
    <text evidence="1">Belongs to the class I-like SAM-binding methyltransferase superfamily. TPMT family.</text>
</comment>
<dbReference type="EC" id="2.1.1.67" evidence="1"/>
<dbReference type="EMBL" id="CP000891">
    <property type="protein sequence ID" value="ABX51070.1"/>
    <property type="molecule type" value="Genomic_DNA"/>
</dbReference>
<dbReference type="RefSeq" id="WP_006084218.1">
    <property type="nucleotide sequence ID" value="NC_009997.1"/>
</dbReference>
<dbReference type="SMR" id="A9L3X6"/>
<dbReference type="KEGG" id="sbn:Sbal195_3910"/>
<dbReference type="HOGENOM" id="CLU_085515_1_0_6"/>
<dbReference type="Proteomes" id="UP000000770">
    <property type="component" value="Chromosome"/>
</dbReference>
<dbReference type="GO" id="GO:0005737">
    <property type="term" value="C:cytoplasm"/>
    <property type="evidence" value="ECO:0007669"/>
    <property type="project" value="UniProtKB-SubCell"/>
</dbReference>
<dbReference type="GO" id="GO:0008119">
    <property type="term" value="F:thiopurine S-methyltransferase activity"/>
    <property type="evidence" value="ECO:0007669"/>
    <property type="project" value="UniProtKB-UniRule"/>
</dbReference>
<dbReference type="GO" id="GO:0032259">
    <property type="term" value="P:methylation"/>
    <property type="evidence" value="ECO:0007669"/>
    <property type="project" value="UniProtKB-KW"/>
</dbReference>
<dbReference type="GO" id="GO:0010038">
    <property type="term" value="P:response to metal ion"/>
    <property type="evidence" value="ECO:0007669"/>
    <property type="project" value="InterPro"/>
</dbReference>
<dbReference type="FunFam" id="3.40.50.150:FF:000101">
    <property type="entry name" value="Thiopurine S-methyltransferase"/>
    <property type="match status" value="1"/>
</dbReference>
<dbReference type="Gene3D" id="3.40.50.150">
    <property type="entry name" value="Vaccinia Virus protein VP39"/>
    <property type="match status" value="1"/>
</dbReference>
<dbReference type="HAMAP" id="MF_00812">
    <property type="entry name" value="Thiopur_methtran"/>
    <property type="match status" value="1"/>
</dbReference>
<dbReference type="InterPro" id="IPR029063">
    <property type="entry name" value="SAM-dependent_MTases_sf"/>
</dbReference>
<dbReference type="InterPro" id="IPR022474">
    <property type="entry name" value="Thiopur_S-MeTfrase_Se/Te_detox"/>
</dbReference>
<dbReference type="InterPro" id="IPR025835">
    <property type="entry name" value="Thiopurine_S-MeTrfase"/>
</dbReference>
<dbReference type="InterPro" id="IPR008854">
    <property type="entry name" value="TPMT"/>
</dbReference>
<dbReference type="NCBIfam" id="NF009732">
    <property type="entry name" value="PRK13255.1"/>
    <property type="match status" value="1"/>
</dbReference>
<dbReference type="NCBIfam" id="TIGR03840">
    <property type="entry name" value="TMPT_Se_Te"/>
    <property type="match status" value="1"/>
</dbReference>
<dbReference type="PANTHER" id="PTHR10259">
    <property type="entry name" value="THIOPURINE S-METHYLTRANSFERASE"/>
    <property type="match status" value="1"/>
</dbReference>
<dbReference type="PANTHER" id="PTHR10259:SF11">
    <property type="entry name" value="THIOPURINE S-METHYLTRANSFERASE"/>
    <property type="match status" value="1"/>
</dbReference>
<dbReference type="Pfam" id="PF05724">
    <property type="entry name" value="TPMT"/>
    <property type="match status" value="1"/>
</dbReference>
<dbReference type="PIRSF" id="PIRSF023956">
    <property type="entry name" value="Thiopurine_S-methyltransferase"/>
    <property type="match status" value="1"/>
</dbReference>
<dbReference type="SUPFAM" id="SSF53335">
    <property type="entry name" value="S-adenosyl-L-methionine-dependent methyltransferases"/>
    <property type="match status" value="1"/>
</dbReference>
<dbReference type="PROSITE" id="PS51585">
    <property type="entry name" value="SAM_MT_TPMT"/>
    <property type="match status" value="1"/>
</dbReference>
<protein>
    <recommendedName>
        <fullName evidence="1">Thiopurine S-methyltransferase</fullName>
        <ecNumber evidence="1">2.1.1.67</ecNumber>
    </recommendedName>
    <alternativeName>
        <fullName evidence="1">Thiopurine methyltransferase</fullName>
    </alternativeName>
</protein>
<evidence type="ECO:0000255" key="1">
    <source>
        <dbReference type="HAMAP-Rule" id="MF_00812"/>
    </source>
</evidence>
<accession>A9L3X6</accession>
<reference key="1">
    <citation type="submission" date="2007-11" db="EMBL/GenBank/DDBJ databases">
        <title>Complete sequence of chromosome of Shewanella baltica OS195.</title>
        <authorList>
            <consortium name="US DOE Joint Genome Institute"/>
            <person name="Copeland A."/>
            <person name="Lucas S."/>
            <person name="Lapidus A."/>
            <person name="Barry K."/>
            <person name="Glavina del Rio T."/>
            <person name="Dalin E."/>
            <person name="Tice H."/>
            <person name="Pitluck S."/>
            <person name="Chain P."/>
            <person name="Malfatti S."/>
            <person name="Shin M."/>
            <person name="Vergez L."/>
            <person name="Schmutz J."/>
            <person name="Larimer F."/>
            <person name="Land M."/>
            <person name="Hauser L."/>
            <person name="Kyrpides N."/>
            <person name="Kim E."/>
            <person name="Brettar I."/>
            <person name="Rodrigues J."/>
            <person name="Konstantinidis K."/>
            <person name="Klappenbach J."/>
            <person name="Hofle M."/>
            <person name="Tiedje J."/>
            <person name="Richardson P."/>
        </authorList>
    </citation>
    <scope>NUCLEOTIDE SEQUENCE [LARGE SCALE GENOMIC DNA]</scope>
    <source>
        <strain>OS195</strain>
    </source>
</reference>
<name>TPMT_SHEB9</name>
<gene>
    <name evidence="1" type="primary">tpm</name>
    <name type="ordered locus">Sbal195_3910</name>
</gene>
<sequence length="218" mass="24776">MEPGFWHEKWHQQQIGFHQQDINPFLVKYWQKLGLPADTQVFVPLCGKSLDMCFLAEQGHQVIGCELNELAVQQFFSDIQLEMTQTTVGEHQHYHTEQISLYQGDIFTLPKAITQEVTAFYDRAALIAWPECMRAQYAKQLASLLPSGSVGLLVTLDYPQEALSGPPFAVSPTWVEQHLSDDFDIGVLASQDVLADNPRFIKKAVPWLNEAAYLLKRK</sequence>